<sequence length="114" mass="13567">WRMIWEHNTRNIIMLTQTVEKGKIKCDHYWPFDNEPIVSGDITIQMTSESMLPEWTIREFKITHGANTRRVRQFHYTVWPDHGVPETTETLVKFIRYVRRTIDGEAKHTGPTIV</sequence>
<protein>
    <recommendedName>
        <fullName>Tyrosine-protein phosphatase 11</fullName>
        <ecNumber>3.1.3.48</ecNumber>
    </recommendedName>
</protein>
<evidence type="ECO:0000250" key="1"/>
<evidence type="ECO:0000255" key="2">
    <source>
        <dbReference type="PROSITE-ProRule" id="PRU00160"/>
    </source>
</evidence>
<evidence type="ECO:0000255" key="3">
    <source>
        <dbReference type="PROSITE-ProRule" id="PRU10044"/>
    </source>
</evidence>
<evidence type="ECO:0000305" key="4"/>
<reference key="1">
    <citation type="journal article" date="1991" name="Immunogenetics">
        <title>Protein tyrosine phosphatase domains from the protochordate Styela plicata.</title>
        <authorList>
            <person name="Matthews R.J."/>
            <person name="Flores E."/>
            <person name="Thomas M.L."/>
        </authorList>
    </citation>
    <scope>NUCLEOTIDE SEQUENCE [MRNA]</scope>
</reference>
<accession>P28203</accession>
<feature type="chain" id="PRO_0000094899" description="Tyrosine-protein phosphatase 11">
    <location>
        <begin position="1" status="less than"/>
        <end position="114" status="greater than"/>
    </location>
</feature>
<feature type="domain" description="Tyrosine-protein phosphatase" evidence="2">
    <location>
        <begin position="1" status="less than"/>
        <end position="114" status="greater than"/>
    </location>
</feature>
<feature type="binding site" evidence="1">
    <location>
        <position position="81"/>
    </location>
    <ligand>
        <name>substrate</name>
    </ligand>
</feature>
<feature type="non-terminal residue">
    <location>
        <position position="1"/>
    </location>
</feature>
<feature type="non-terminal residue">
    <location>
        <position position="114"/>
    </location>
</feature>
<keyword id="KW-0378">Hydrolase</keyword>
<keyword id="KW-0904">Protein phosphatase</keyword>
<organism>
    <name type="scientific">Styela plicata</name>
    <name type="common">Wrinkled sea squirt</name>
    <name type="synonym">Ascidia plicata</name>
    <dbReference type="NCBI Taxonomy" id="7726"/>
    <lineage>
        <taxon>Eukaryota</taxon>
        <taxon>Metazoa</taxon>
        <taxon>Chordata</taxon>
        <taxon>Tunicata</taxon>
        <taxon>Ascidiacea</taxon>
        <taxon>Stolidobranchia</taxon>
        <taxon>Styelidae</taxon>
        <taxon>Styela</taxon>
    </lineage>
</organism>
<dbReference type="EC" id="3.1.3.48"/>
<dbReference type="EMBL" id="M37996">
    <property type="protein sequence ID" value="AAA29829.1"/>
    <property type="molecule type" value="mRNA"/>
</dbReference>
<dbReference type="SMR" id="P28203"/>
<dbReference type="GO" id="GO:0043235">
    <property type="term" value="C:receptor complex"/>
    <property type="evidence" value="ECO:0007669"/>
    <property type="project" value="TreeGrafter"/>
</dbReference>
<dbReference type="GO" id="GO:0045296">
    <property type="term" value="F:cadherin binding"/>
    <property type="evidence" value="ECO:0007669"/>
    <property type="project" value="TreeGrafter"/>
</dbReference>
<dbReference type="GO" id="GO:0004725">
    <property type="term" value="F:protein tyrosine phosphatase activity"/>
    <property type="evidence" value="ECO:0007669"/>
    <property type="project" value="UniProtKB-EC"/>
</dbReference>
<dbReference type="Gene3D" id="3.90.190.10">
    <property type="entry name" value="Protein tyrosine phosphatase superfamily"/>
    <property type="match status" value="1"/>
</dbReference>
<dbReference type="InterPro" id="IPR029021">
    <property type="entry name" value="Prot-tyrosine_phosphatase-like"/>
</dbReference>
<dbReference type="InterPro" id="IPR000242">
    <property type="entry name" value="PTP_cat"/>
</dbReference>
<dbReference type="InterPro" id="IPR050713">
    <property type="entry name" value="RTP_Phos/Ushers"/>
</dbReference>
<dbReference type="PANTHER" id="PTHR46957">
    <property type="entry name" value="CYTOKINE RECEPTOR"/>
    <property type="match status" value="1"/>
</dbReference>
<dbReference type="PANTHER" id="PTHR46957:SF2">
    <property type="entry name" value="RECEPTOR-TYPE TYROSINE-PROTEIN PHOSPHATASE BETA"/>
    <property type="match status" value="1"/>
</dbReference>
<dbReference type="Pfam" id="PF00102">
    <property type="entry name" value="Y_phosphatase"/>
    <property type="match status" value="1"/>
</dbReference>
<dbReference type="SMART" id="SM00194">
    <property type="entry name" value="PTPc"/>
    <property type="match status" value="1"/>
</dbReference>
<dbReference type="SUPFAM" id="SSF52799">
    <property type="entry name" value="(Phosphotyrosine protein) phosphatases II"/>
    <property type="match status" value="1"/>
</dbReference>
<dbReference type="PROSITE" id="PS50055">
    <property type="entry name" value="TYR_PHOSPHATASE_PTP"/>
    <property type="match status" value="1"/>
</dbReference>
<gene>
    <name type="primary">STY-11</name>
</gene>
<proteinExistence type="evidence at transcript level"/>
<name>PTP11_STYPL</name>
<comment type="catalytic activity">
    <reaction evidence="3">
        <text>O-phospho-L-tyrosyl-[protein] + H2O = L-tyrosyl-[protein] + phosphate</text>
        <dbReference type="Rhea" id="RHEA:10684"/>
        <dbReference type="Rhea" id="RHEA-COMP:10136"/>
        <dbReference type="Rhea" id="RHEA-COMP:20101"/>
        <dbReference type="ChEBI" id="CHEBI:15377"/>
        <dbReference type="ChEBI" id="CHEBI:43474"/>
        <dbReference type="ChEBI" id="CHEBI:46858"/>
        <dbReference type="ChEBI" id="CHEBI:61978"/>
        <dbReference type="EC" id="3.1.3.48"/>
    </reaction>
</comment>
<comment type="similarity">
    <text evidence="4">Belongs to the protein-tyrosine phosphatase family.</text>
</comment>